<protein>
    <recommendedName>
        <fullName evidence="1">Na(+)/H(+) antiporter NhaA</fullName>
    </recommendedName>
    <alternativeName>
        <fullName evidence="1">Sodium/proton antiporter NhaA</fullName>
    </alternativeName>
</protein>
<name>NHAA_ALIF1</name>
<accession>Q5E6G4</accession>
<evidence type="ECO:0000255" key="1">
    <source>
        <dbReference type="HAMAP-Rule" id="MF_01844"/>
    </source>
</evidence>
<dbReference type="EMBL" id="CP000020">
    <property type="protein sequence ID" value="AAW85382.1"/>
    <property type="molecule type" value="Genomic_DNA"/>
</dbReference>
<dbReference type="RefSeq" id="WP_011261552.1">
    <property type="nucleotide sequence ID" value="NZ_CAWLES010000001.1"/>
</dbReference>
<dbReference type="RefSeq" id="YP_204270.1">
    <property type="nucleotide sequence ID" value="NC_006840.2"/>
</dbReference>
<dbReference type="SMR" id="Q5E6G4"/>
<dbReference type="STRING" id="312309.VF_0887"/>
<dbReference type="EnsemblBacteria" id="AAW85382">
    <property type="protein sequence ID" value="AAW85382"/>
    <property type="gene ID" value="VF_0887"/>
</dbReference>
<dbReference type="GeneID" id="54163555"/>
<dbReference type="KEGG" id="vfi:VF_0887"/>
<dbReference type="PATRIC" id="fig|312309.11.peg.883"/>
<dbReference type="eggNOG" id="COG3004">
    <property type="taxonomic scope" value="Bacteria"/>
</dbReference>
<dbReference type="HOGENOM" id="CLU_015803_1_0_6"/>
<dbReference type="OrthoDB" id="9808135at2"/>
<dbReference type="Proteomes" id="UP000000537">
    <property type="component" value="Chromosome I"/>
</dbReference>
<dbReference type="GO" id="GO:0005886">
    <property type="term" value="C:plasma membrane"/>
    <property type="evidence" value="ECO:0007669"/>
    <property type="project" value="UniProtKB-SubCell"/>
</dbReference>
<dbReference type="GO" id="GO:0015385">
    <property type="term" value="F:sodium:proton antiporter activity"/>
    <property type="evidence" value="ECO:0007669"/>
    <property type="project" value="TreeGrafter"/>
</dbReference>
<dbReference type="GO" id="GO:0006885">
    <property type="term" value="P:regulation of pH"/>
    <property type="evidence" value="ECO:0007669"/>
    <property type="project" value="InterPro"/>
</dbReference>
<dbReference type="Gene3D" id="1.20.1530.10">
    <property type="entry name" value="Na+/H+ antiporter like domain"/>
    <property type="match status" value="1"/>
</dbReference>
<dbReference type="HAMAP" id="MF_01844">
    <property type="entry name" value="NhaA"/>
    <property type="match status" value="1"/>
</dbReference>
<dbReference type="InterPro" id="IPR023171">
    <property type="entry name" value="Na/H_antiporter_dom_sf"/>
</dbReference>
<dbReference type="InterPro" id="IPR004670">
    <property type="entry name" value="NhaA"/>
</dbReference>
<dbReference type="NCBIfam" id="TIGR00773">
    <property type="entry name" value="NhaA"/>
    <property type="match status" value="1"/>
</dbReference>
<dbReference type="NCBIfam" id="NF007111">
    <property type="entry name" value="PRK09560.1"/>
    <property type="match status" value="1"/>
</dbReference>
<dbReference type="NCBIfam" id="NF007112">
    <property type="entry name" value="PRK09561.1"/>
    <property type="match status" value="1"/>
</dbReference>
<dbReference type="PANTHER" id="PTHR30341:SF0">
    <property type="entry name" value="NA(+)_H(+) ANTIPORTER NHAA"/>
    <property type="match status" value="1"/>
</dbReference>
<dbReference type="PANTHER" id="PTHR30341">
    <property type="entry name" value="SODIUM ION/PROTON ANTIPORTER NHAA-RELATED"/>
    <property type="match status" value="1"/>
</dbReference>
<dbReference type="Pfam" id="PF06965">
    <property type="entry name" value="Na_H_antiport_1"/>
    <property type="match status" value="1"/>
</dbReference>
<gene>
    <name evidence="1" type="primary">nhaA</name>
    <name type="ordered locus">VF_0887</name>
</gene>
<organism>
    <name type="scientific">Aliivibrio fischeri (strain ATCC 700601 / ES114)</name>
    <name type="common">Vibrio fischeri</name>
    <dbReference type="NCBI Taxonomy" id="312309"/>
    <lineage>
        <taxon>Bacteria</taxon>
        <taxon>Pseudomonadati</taxon>
        <taxon>Pseudomonadota</taxon>
        <taxon>Gammaproteobacteria</taxon>
        <taxon>Vibrionales</taxon>
        <taxon>Vibrionaceae</taxon>
        <taxon>Aliivibrio</taxon>
    </lineage>
</organism>
<sequence>MSDVIKNFFKLESAGGILLVIAAAIAMMIANSSLAPMYDTFLHSYIGGMSVSHWINDGLMAVFFLLIGLEVKRELLEGALKSKETAIFPAIAAVGGMLAPALVYVAFNMGDPEALSGWAIPAATDIAFALGIMALLGNRVPVSLKVFLLALAIIDDLGVVVIIAFFYTSDLSVLALVIGFVMTGLLFLLNAKHVTKIRWYLLVGFILWVSVLQSGVHATLAGVVLGFAIPLKGNKGERSPLKHMEHALHPYVAFAILPVFAFANAGISLEGVSLDSLTTTLPLGVALGLFLGKPLGIFSFSYLAVKSGVAKLPTGVNMKHIFAVSVLCGIGFTMSIFISSLAFGGVNPEFDKLARLGILMGSTFAAVVGYALLSISLPKKAA</sequence>
<keyword id="KW-0050">Antiport</keyword>
<keyword id="KW-0997">Cell inner membrane</keyword>
<keyword id="KW-1003">Cell membrane</keyword>
<keyword id="KW-0406">Ion transport</keyword>
<keyword id="KW-0472">Membrane</keyword>
<keyword id="KW-1185">Reference proteome</keyword>
<keyword id="KW-0915">Sodium</keyword>
<keyword id="KW-0739">Sodium transport</keyword>
<keyword id="KW-0812">Transmembrane</keyword>
<keyword id="KW-1133">Transmembrane helix</keyword>
<keyword id="KW-0813">Transport</keyword>
<proteinExistence type="inferred from homology"/>
<comment type="function">
    <text evidence="1">Na(+)/H(+) antiporter that extrudes sodium in exchange for external protons.</text>
</comment>
<comment type="catalytic activity">
    <reaction evidence="1">
        <text>Na(+)(in) + 2 H(+)(out) = Na(+)(out) + 2 H(+)(in)</text>
        <dbReference type="Rhea" id="RHEA:29251"/>
        <dbReference type="ChEBI" id="CHEBI:15378"/>
        <dbReference type="ChEBI" id="CHEBI:29101"/>
    </reaction>
    <physiologicalReaction direction="left-to-right" evidence="1">
        <dbReference type="Rhea" id="RHEA:29252"/>
    </physiologicalReaction>
</comment>
<comment type="subcellular location">
    <subcellularLocation>
        <location evidence="1">Cell inner membrane</location>
        <topology evidence="1">Multi-pass membrane protein</topology>
    </subcellularLocation>
</comment>
<comment type="similarity">
    <text evidence="1">Belongs to the NhaA Na(+)/H(+) (TC 2.A.33) antiporter family.</text>
</comment>
<reference key="1">
    <citation type="journal article" date="2005" name="Proc. Natl. Acad. Sci. U.S.A.">
        <title>Complete genome sequence of Vibrio fischeri: a symbiotic bacterium with pathogenic congeners.</title>
        <authorList>
            <person name="Ruby E.G."/>
            <person name="Urbanowski M."/>
            <person name="Campbell J."/>
            <person name="Dunn A."/>
            <person name="Faini M."/>
            <person name="Gunsalus R."/>
            <person name="Lostroh P."/>
            <person name="Lupp C."/>
            <person name="McCann J."/>
            <person name="Millikan D."/>
            <person name="Schaefer A."/>
            <person name="Stabb E."/>
            <person name="Stevens A."/>
            <person name="Visick K."/>
            <person name="Whistler C."/>
            <person name="Greenberg E.P."/>
        </authorList>
    </citation>
    <scope>NUCLEOTIDE SEQUENCE [LARGE SCALE GENOMIC DNA]</scope>
    <source>
        <strain>ATCC 700601 / ES114</strain>
    </source>
</reference>
<feature type="chain" id="PRO_0000334458" description="Na(+)/H(+) antiporter NhaA">
    <location>
        <begin position="1"/>
        <end position="382"/>
    </location>
</feature>
<feature type="transmembrane region" description="Helical" evidence="1">
    <location>
        <begin position="14"/>
        <end position="34"/>
    </location>
</feature>
<feature type="transmembrane region" description="Helical" evidence="1">
    <location>
        <begin position="49"/>
        <end position="69"/>
    </location>
</feature>
<feature type="transmembrane region" description="Helical" evidence="1">
    <location>
        <begin position="87"/>
        <end position="107"/>
    </location>
</feature>
<feature type="transmembrane region" description="Helical" evidence="1">
    <location>
        <begin position="117"/>
        <end position="137"/>
    </location>
</feature>
<feature type="transmembrane region" description="Helical" evidence="1">
    <location>
        <begin position="146"/>
        <end position="166"/>
    </location>
</feature>
<feature type="transmembrane region" description="Helical" evidence="1">
    <location>
        <begin position="171"/>
        <end position="191"/>
    </location>
</feature>
<feature type="transmembrane region" description="Helical" evidence="1">
    <location>
        <begin position="205"/>
        <end position="225"/>
    </location>
</feature>
<feature type="transmembrane region" description="Helical" evidence="1">
    <location>
        <begin position="252"/>
        <end position="272"/>
    </location>
</feature>
<feature type="transmembrane region" description="Helical" evidence="1">
    <location>
        <begin position="285"/>
        <end position="305"/>
    </location>
</feature>
<feature type="transmembrane region" description="Helical" evidence="1">
    <location>
        <begin position="321"/>
        <end position="341"/>
    </location>
</feature>
<feature type="transmembrane region" description="Helical" evidence="1">
    <location>
        <begin position="356"/>
        <end position="376"/>
    </location>
</feature>